<protein>
    <recommendedName>
        <fullName evidence="1">Hemin import ATP-binding protein HmuV</fullName>
        <ecNumber evidence="1">7.6.2.-</ecNumber>
    </recommendedName>
</protein>
<name>HMUV_THEFY</name>
<evidence type="ECO:0000255" key="1">
    <source>
        <dbReference type="HAMAP-Rule" id="MF_01718"/>
    </source>
</evidence>
<proteinExistence type="inferred from homology"/>
<organism>
    <name type="scientific">Thermobifida fusca (strain YX)</name>
    <dbReference type="NCBI Taxonomy" id="269800"/>
    <lineage>
        <taxon>Bacteria</taxon>
        <taxon>Bacillati</taxon>
        <taxon>Actinomycetota</taxon>
        <taxon>Actinomycetes</taxon>
        <taxon>Streptosporangiales</taxon>
        <taxon>Nocardiopsidaceae</taxon>
        <taxon>Thermobifida</taxon>
    </lineage>
</organism>
<accession>Q47MA5</accession>
<feature type="chain" id="PRO_0000269632" description="Hemin import ATP-binding protein HmuV">
    <location>
        <begin position="1"/>
        <end position="284"/>
    </location>
</feature>
<feature type="domain" description="ABC transporter" evidence="1">
    <location>
        <begin position="33"/>
        <end position="266"/>
    </location>
</feature>
<feature type="binding site" evidence="1">
    <location>
        <begin position="65"/>
        <end position="72"/>
    </location>
    <ligand>
        <name>ATP</name>
        <dbReference type="ChEBI" id="CHEBI:30616"/>
    </ligand>
</feature>
<gene>
    <name evidence="1" type="primary">hmuV</name>
    <name type="ordered locus">Tfu_2384</name>
</gene>
<reference key="1">
    <citation type="journal article" date="2007" name="J. Bacteriol.">
        <title>Genome sequence and analysis of the soil cellulolytic actinomycete Thermobifida fusca YX.</title>
        <authorList>
            <person name="Lykidis A."/>
            <person name="Mavromatis K."/>
            <person name="Ivanova N."/>
            <person name="Anderson I."/>
            <person name="Land M."/>
            <person name="DiBartolo G."/>
            <person name="Martinez M."/>
            <person name="Lapidus A."/>
            <person name="Lucas S."/>
            <person name="Copeland A."/>
            <person name="Richardson P."/>
            <person name="Wilson D.B."/>
            <person name="Kyrpides N."/>
        </authorList>
    </citation>
    <scope>NUCLEOTIDE SEQUENCE [LARGE SCALE GENOMIC DNA]</scope>
    <source>
        <strain>YX</strain>
    </source>
</reference>
<keyword id="KW-0067">ATP-binding</keyword>
<keyword id="KW-1003">Cell membrane</keyword>
<keyword id="KW-0472">Membrane</keyword>
<keyword id="KW-0547">Nucleotide-binding</keyword>
<keyword id="KW-1278">Translocase</keyword>
<keyword id="KW-0813">Transport</keyword>
<sequence length="284" mass="30443">MKRIRQTMRAVVHGSGLRRLTPPQRVTSGTVVLGARHLSKSYGARTVLDDVSLDVRTGEVLALVGPNGAGKSTLLSILTGDTPPDRGEVTVLDRPLAAWSPAELALRRAVLPQSFTVSFPFDVVDVVHMGRAPWAAVDVDVDDDRVVADAMAATEVTALAARKFPSLSGGEKARVMLARVLAQQTQIMLWDEPTAALDIRHQESVLRIARQRAAQGDAIVVVLHDLALAAAYADQVAILSQGQIAAYGPPAEVFTAKLLSDVYSYEVEIVSHPRTGVPLVLPVR</sequence>
<dbReference type="EC" id="7.6.2.-" evidence="1"/>
<dbReference type="EMBL" id="CP000088">
    <property type="protein sequence ID" value="AAZ56417.1"/>
    <property type="molecule type" value="Genomic_DNA"/>
</dbReference>
<dbReference type="RefSeq" id="WP_011292807.1">
    <property type="nucleotide sequence ID" value="NC_007333.1"/>
</dbReference>
<dbReference type="SMR" id="Q47MA5"/>
<dbReference type="STRING" id="269800.Tfu_2384"/>
<dbReference type="KEGG" id="tfu:Tfu_2384"/>
<dbReference type="eggNOG" id="COG4559">
    <property type="taxonomic scope" value="Bacteria"/>
</dbReference>
<dbReference type="HOGENOM" id="CLU_000604_1_11_11"/>
<dbReference type="OrthoDB" id="3475572at2"/>
<dbReference type="GO" id="GO:0005886">
    <property type="term" value="C:plasma membrane"/>
    <property type="evidence" value="ECO:0007669"/>
    <property type="project" value="UniProtKB-SubCell"/>
</dbReference>
<dbReference type="GO" id="GO:0005524">
    <property type="term" value="F:ATP binding"/>
    <property type="evidence" value="ECO:0007669"/>
    <property type="project" value="UniProtKB-KW"/>
</dbReference>
<dbReference type="GO" id="GO:0016887">
    <property type="term" value="F:ATP hydrolysis activity"/>
    <property type="evidence" value="ECO:0007669"/>
    <property type="project" value="InterPro"/>
</dbReference>
<dbReference type="CDD" id="cd03214">
    <property type="entry name" value="ABC_Iron-Siderophores_B12_Hemin"/>
    <property type="match status" value="1"/>
</dbReference>
<dbReference type="FunFam" id="3.40.50.300:FF:000134">
    <property type="entry name" value="Iron-enterobactin ABC transporter ATP-binding protein"/>
    <property type="match status" value="1"/>
</dbReference>
<dbReference type="Gene3D" id="3.40.50.300">
    <property type="entry name" value="P-loop containing nucleotide triphosphate hydrolases"/>
    <property type="match status" value="1"/>
</dbReference>
<dbReference type="InterPro" id="IPR003593">
    <property type="entry name" value="AAA+_ATPase"/>
</dbReference>
<dbReference type="InterPro" id="IPR003439">
    <property type="entry name" value="ABC_transporter-like_ATP-bd"/>
</dbReference>
<dbReference type="InterPro" id="IPR017871">
    <property type="entry name" value="ABC_transporter-like_CS"/>
</dbReference>
<dbReference type="InterPro" id="IPR027417">
    <property type="entry name" value="P-loop_NTPase"/>
</dbReference>
<dbReference type="NCBIfam" id="NF010068">
    <property type="entry name" value="PRK13548.1"/>
    <property type="match status" value="1"/>
</dbReference>
<dbReference type="PANTHER" id="PTHR42794">
    <property type="entry name" value="HEMIN IMPORT ATP-BINDING PROTEIN HMUV"/>
    <property type="match status" value="1"/>
</dbReference>
<dbReference type="PANTHER" id="PTHR42794:SF1">
    <property type="entry name" value="HEMIN IMPORT ATP-BINDING PROTEIN HMUV"/>
    <property type="match status" value="1"/>
</dbReference>
<dbReference type="Pfam" id="PF00005">
    <property type="entry name" value="ABC_tran"/>
    <property type="match status" value="1"/>
</dbReference>
<dbReference type="SMART" id="SM00382">
    <property type="entry name" value="AAA"/>
    <property type="match status" value="1"/>
</dbReference>
<dbReference type="SUPFAM" id="SSF52540">
    <property type="entry name" value="P-loop containing nucleoside triphosphate hydrolases"/>
    <property type="match status" value="1"/>
</dbReference>
<dbReference type="PROSITE" id="PS00211">
    <property type="entry name" value="ABC_TRANSPORTER_1"/>
    <property type="match status" value="1"/>
</dbReference>
<dbReference type="PROSITE" id="PS50893">
    <property type="entry name" value="ABC_TRANSPORTER_2"/>
    <property type="match status" value="1"/>
</dbReference>
<dbReference type="PROSITE" id="PS51261">
    <property type="entry name" value="HMUV"/>
    <property type="match status" value="1"/>
</dbReference>
<comment type="function">
    <text evidence="1">Part of the ABC transporter complex HmuTUV involved in hemin import. Responsible for energy coupling to the transport system.</text>
</comment>
<comment type="subunit">
    <text evidence="1">The complex is composed of two ATP-binding proteins (HmuV), two transmembrane proteins (HmuU) and a solute-binding protein (HmuT).</text>
</comment>
<comment type="subcellular location">
    <subcellularLocation>
        <location evidence="1">Cell membrane</location>
        <topology evidence="1">Peripheral membrane protein</topology>
    </subcellularLocation>
</comment>
<comment type="similarity">
    <text evidence="1">Belongs to the ABC transporter superfamily. Heme (hemin) importer (TC 3.A.1.14.5) family.</text>
</comment>